<comment type="function">
    <text evidence="1">Required for the proteolytic cleavage of the transcription factor RIM101 in response to alkaline ambient pH.</text>
</comment>
<comment type="similarity">
    <text evidence="4">Belongs to the palC family.</text>
</comment>
<name>PALC_CRYNB</name>
<gene>
    <name type="ordered locus">CNBE3350</name>
</gene>
<protein>
    <recommendedName>
        <fullName>pH-response regulator protein palC</fullName>
    </recommendedName>
</protein>
<sequence length="488" mass="53177">MPPYLYRLPTTSLITFSAILNDPSSSYTTILSDATASRTKLHLALKGIADNEPGASALAVLDAVQIYLPYLKGIIACLDADELLFKGEPTFQWRAPLTHFSFSSPLLPLASIHSEHLMVVLTYALALSNYAHSILASLPAFEIPAGPKAMPHMSSEDEKRTTAGLARAVDLLCQASGVAEWAAENVCLQVEPLKGVSSGRLGKGKWPAESSRETFKALSMILLADAHLTAIRKLLFPVLTYTLFAPPGPPLPPNHPSAPLQAKLYLYVHQLYSSARALLSVHQQPTSSAPSNSSRKLFRSNTDKDVIEPEAVEGEIIPELKRYLAKEAQLALALAHKWLGIDAGENGKGAKVGEALAWVKDAQGRLEDLEDSKMRAKLKGLSIGKSRERKKEERRARMGRVERELEVVKAWVKAYQKMNDTVAFQPVPPVSSLVTPSGRPIFGPKAFIPPPSKFSPSRIGHLNEEQGNDSPELGETEDTSYAGKGNYF</sequence>
<feature type="chain" id="PRO_0000410026" description="pH-response regulator protein palC">
    <location>
        <begin position="1"/>
        <end position="488"/>
    </location>
</feature>
<feature type="domain" description="BRO1" evidence="2">
    <location>
        <begin position="2"/>
        <end position="430"/>
    </location>
</feature>
<feature type="region of interest" description="Disordered" evidence="3">
    <location>
        <begin position="449"/>
        <end position="488"/>
    </location>
</feature>
<dbReference type="EMBL" id="AAEY01000026">
    <property type="protein sequence ID" value="EAL20627.1"/>
    <property type="molecule type" value="Genomic_DNA"/>
</dbReference>
<dbReference type="RefSeq" id="XP_775274.1">
    <property type="nucleotide sequence ID" value="XM_770181.1"/>
</dbReference>
<dbReference type="SMR" id="P0CM49"/>
<dbReference type="GeneID" id="4936345"/>
<dbReference type="KEGG" id="cnb:CNBE3350"/>
<dbReference type="VEuPathDB" id="FungiDB:CNBE3350"/>
<dbReference type="HOGENOM" id="CLU_027723_0_0_1"/>
<dbReference type="OrthoDB" id="8857at5206"/>
<dbReference type="GO" id="GO:0005886">
    <property type="term" value="C:plasma membrane"/>
    <property type="evidence" value="ECO:0007669"/>
    <property type="project" value="TreeGrafter"/>
</dbReference>
<dbReference type="GO" id="GO:0071467">
    <property type="term" value="P:cellular response to pH"/>
    <property type="evidence" value="ECO:0007669"/>
    <property type="project" value="InterPro"/>
</dbReference>
<dbReference type="CDD" id="cd09245">
    <property type="entry name" value="BRO1_UmRIM23-like"/>
    <property type="match status" value="1"/>
</dbReference>
<dbReference type="Gene3D" id="1.25.40.280">
    <property type="entry name" value="alix/aip1 like domains"/>
    <property type="match status" value="1"/>
</dbReference>
<dbReference type="InterPro" id="IPR004328">
    <property type="entry name" value="BRO1_dom"/>
</dbReference>
<dbReference type="InterPro" id="IPR038499">
    <property type="entry name" value="BRO1_sf"/>
</dbReference>
<dbReference type="InterPro" id="IPR037505">
    <property type="entry name" value="pH-resp_palC"/>
</dbReference>
<dbReference type="PANTHER" id="PTHR40463">
    <property type="entry name" value="PH-RESPONSE REGULATOR PROTEIN PALC"/>
    <property type="match status" value="1"/>
</dbReference>
<dbReference type="PANTHER" id="PTHR40463:SF1">
    <property type="entry name" value="PH-RESPONSE REGULATOR PROTEIN PALC"/>
    <property type="match status" value="1"/>
</dbReference>
<dbReference type="Pfam" id="PF03097">
    <property type="entry name" value="BRO1"/>
    <property type="match status" value="1"/>
</dbReference>
<dbReference type="SMART" id="SM01041">
    <property type="entry name" value="BRO1"/>
    <property type="match status" value="1"/>
</dbReference>
<dbReference type="PROSITE" id="PS51180">
    <property type="entry name" value="BRO1"/>
    <property type="match status" value="1"/>
</dbReference>
<proteinExistence type="inferred from homology"/>
<keyword id="KW-0175">Coiled coil</keyword>
<evidence type="ECO:0000250" key="1"/>
<evidence type="ECO:0000255" key="2">
    <source>
        <dbReference type="PROSITE-ProRule" id="PRU00526"/>
    </source>
</evidence>
<evidence type="ECO:0000256" key="3">
    <source>
        <dbReference type="SAM" id="MobiDB-lite"/>
    </source>
</evidence>
<evidence type="ECO:0000305" key="4"/>
<accession>P0CM49</accession>
<accession>Q55S47</accession>
<accession>Q5KGJ9</accession>
<organism>
    <name type="scientific">Cryptococcus neoformans var. neoformans serotype D (strain B-3501A)</name>
    <name type="common">Filobasidiella neoformans</name>
    <dbReference type="NCBI Taxonomy" id="283643"/>
    <lineage>
        <taxon>Eukaryota</taxon>
        <taxon>Fungi</taxon>
        <taxon>Dikarya</taxon>
        <taxon>Basidiomycota</taxon>
        <taxon>Agaricomycotina</taxon>
        <taxon>Tremellomycetes</taxon>
        <taxon>Tremellales</taxon>
        <taxon>Cryptococcaceae</taxon>
        <taxon>Cryptococcus</taxon>
        <taxon>Cryptococcus neoformans species complex</taxon>
    </lineage>
</organism>
<reference key="1">
    <citation type="journal article" date="2005" name="Science">
        <title>The genome of the basidiomycetous yeast and human pathogen Cryptococcus neoformans.</title>
        <authorList>
            <person name="Loftus B.J."/>
            <person name="Fung E."/>
            <person name="Roncaglia P."/>
            <person name="Rowley D."/>
            <person name="Amedeo P."/>
            <person name="Bruno D."/>
            <person name="Vamathevan J."/>
            <person name="Miranda M."/>
            <person name="Anderson I.J."/>
            <person name="Fraser J.A."/>
            <person name="Allen J.E."/>
            <person name="Bosdet I.E."/>
            <person name="Brent M.R."/>
            <person name="Chiu R."/>
            <person name="Doering T.L."/>
            <person name="Donlin M.J."/>
            <person name="D'Souza C.A."/>
            <person name="Fox D.S."/>
            <person name="Grinberg V."/>
            <person name="Fu J."/>
            <person name="Fukushima M."/>
            <person name="Haas B.J."/>
            <person name="Huang J.C."/>
            <person name="Janbon G."/>
            <person name="Jones S.J.M."/>
            <person name="Koo H.L."/>
            <person name="Krzywinski M.I."/>
            <person name="Kwon-Chung K.J."/>
            <person name="Lengeler K.B."/>
            <person name="Maiti R."/>
            <person name="Marra M.A."/>
            <person name="Marra R.E."/>
            <person name="Mathewson C.A."/>
            <person name="Mitchell T.G."/>
            <person name="Pertea M."/>
            <person name="Riggs F.R."/>
            <person name="Salzberg S.L."/>
            <person name="Schein J.E."/>
            <person name="Shvartsbeyn A."/>
            <person name="Shin H."/>
            <person name="Shumway M."/>
            <person name="Specht C.A."/>
            <person name="Suh B.B."/>
            <person name="Tenney A."/>
            <person name="Utterback T.R."/>
            <person name="Wickes B.L."/>
            <person name="Wortman J.R."/>
            <person name="Wye N.H."/>
            <person name="Kronstad J.W."/>
            <person name="Lodge J.K."/>
            <person name="Heitman J."/>
            <person name="Davis R.W."/>
            <person name="Fraser C.M."/>
            <person name="Hyman R.W."/>
        </authorList>
    </citation>
    <scope>NUCLEOTIDE SEQUENCE [LARGE SCALE GENOMIC DNA]</scope>
    <source>
        <strain>B-3501A</strain>
    </source>
</reference>